<gene>
    <name type="ordered locus">MG109</name>
</gene>
<feature type="chain" id="PRO_0000171201" description="Putative serine/threonine-protein kinase">
    <location>
        <begin position="1"/>
        <end position="387"/>
    </location>
</feature>
<feature type="transmembrane region" description="Helical" evidence="1">
    <location>
        <begin position="232"/>
        <end position="252"/>
    </location>
</feature>
<feature type="transmembrane region" description="Helical" evidence="1">
    <location>
        <begin position="363"/>
        <end position="383"/>
    </location>
</feature>
<feature type="domain" description="Protein kinase" evidence="2">
    <location>
        <begin position="15"/>
        <end position="344"/>
    </location>
</feature>
<feature type="active site" description="Proton acceptor" evidence="2 3">
    <location>
        <position position="164"/>
    </location>
</feature>
<feature type="binding site" evidence="2">
    <location>
        <begin position="21"/>
        <end position="29"/>
    </location>
    <ligand>
        <name>ATP</name>
        <dbReference type="ChEBI" id="CHEBI:30616"/>
    </ligand>
</feature>
<feature type="binding site" evidence="2">
    <location>
        <position position="55"/>
    </location>
    <ligand>
        <name>ATP</name>
        <dbReference type="ChEBI" id="CHEBI:30616"/>
    </ligand>
</feature>
<organism>
    <name type="scientific">Mycoplasma genitalium (strain ATCC 33530 / DSM 19775 / NCTC 10195 / G37)</name>
    <name type="common">Mycoplasmoides genitalium</name>
    <dbReference type="NCBI Taxonomy" id="243273"/>
    <lineage>
        <taxon>Bacteria</taxon>
        <taxon>Bacillati</taxon>
        <taxon>Mycoplasmatota</taxon>
        <taxon>Mycoplasmoidales</taxon>
        <taxon>Mycoplasmoidaceae</taxon>
        <taxon>Mycoplasmoides</taxon>
    </lineage>
</organism>
<accession>P47355</accession>
<accession>Q49450</accession>
<name>PKNS_MYCGE</name>
<reference key="1">
    <citation type="journal article" date="1995" name="Science">
        <title>The minimal gene complement of Mycoplasma genitalium.</title>
        <authorList>
            <person name="Fraser C.M."/>
            <person name="Gocayne J.D."/>
            <person name="White O."/>
            <person name="Adams M.D."/>
            <person name="Clayton R.A."/>
            <person name="Fleischmann R.D."/>
            <person name="Bult C.J."/>
            <person name="Kerlavage A.R."/>
            <person name="Sutton G.G."/>
            <person name="Kelley J.M."/>
            <person name="Fritchman J.L."/>
            <person name="Weidman J.F."/>
            <person name="Small K.V."/>
            <person name="Sandusky M."/>
            <person name="Fuhrmann J.L."/>
            <person name="Nguyen D.T."/>
            <person name="Utterback T.R."/>
            <person name="Saudek D.M."/>
            <person name="Phillips C.A."/>
            <person name="Merrick J.M."/>
            <person name="Tomb J.-F."/>
            <person name="Dougherty B.A."/>
            <person name="Bott K.F."/>
            <person name="Hu P.-C."/>
            <person name="Lucier T.S."/>
            <person name="Peterson S.N."/>
            <person name="Smith H.O."/>
            <person name="Hutchison C.A. III"/>
            <person name="Venter J.C."/>
        </authorList>
    </citation>
    <scope>NUCLEOTIDE SEQUENCE [LARGE SCALE GENOMIC DNA]</scope>
    <source>
        <strain>ATCC 33530 / DSM 19775 / NCTC 10195 / G37</strain>
    </source>
</reference>
<reference key="2">
    <citation type="journal article" date="1993" name="J. Bacteriol.">
        <title>A survey of the Mycoplasma genitalium genome by using random sequencing.</title>
        <authorList>
            <person name="Peterson S.N."/>
            <person name="Hu P.-C."/>
            <person name="Bott K.F."/>
            <person name="Hutchison C.A. III"/>
        </authorList>
    </citation>
    <scope>NUCLEOTIDE SEQUENCE [GENOMIC DNA] OF 143-262 AND 286-376</scope>
    <source>
        <strain>ATCC 33530 / DSM 19775 / NCTC 10195 / G37</strain>
    </source>
</reference>
<reference key="3">
    <citation type="journal article" date="2006" name="Proc. Natl. Acad. Sci. U.S.A.">
        <title>Essential genes of a minimal bacterium.</title>
        <authorList>
            <person name="Glass J.I."/>
            <person name="Assad-Garcia N."/>
            <person name="Alperovich N."/>
            <person name="Yooseph S."/>
            <person name="Lewis M.R."/>
            <person name="Maruf M."/>
            <person name="Hutchison C.A. III"/>
            <person name="Smith H.O."/>
            <person name="Venter J.C."/>
        </authorList>
    </citation>
    <scope>SEQUENCE REVISION</scope>
    <scope>DISRUPTION PHENOTYPE</scope>
    <source>
        <strain>ATCC 33530 / DSM 19775 / NCTC 10195 / G37</strain>
    </source>
</reference>
<evidence type="ECO:0000255" key="1"/>
<evidence type="ECO:0000255" key="2">
    <source>
        <dbReference type="PROSITE-ProRule" id="PRU00159"/>
    </source>
</evidence>
<evidence type="ECO:0000255" key="3">
    <source>
        <dbReference type="PROSITE-ProRule" id="PRU10027"/>
    </source>
</evidence>
<evidence type="ECO:0000269" key="4">
    <source>
    </source>
</evidence>
<comment type="catalytic activity">
    <reaction>
        <text>L-seryl-[protein] + ATP = O-phospho-L-seryl-[protein] + ADP + H(+)</text>
        <dbReference type="Rhea" id="RHEA:17989"/>
        <dbReference type="Rhea" id="RHEA-COMP:9863"/>
        <dbReference type="Rhea" id="RHEA-COMP:11604"/>
        <dbReference type="ChEBI" id="CHEBI:15378"/>
        <dbReference type="ChEBI" id="CHEBI:29999"/>
        <dbReference type="ChEBI" id="CHEBI:30616"/>
        <dbReference type="ChEBI" id="CHEBI:83421"/>
        <dbReference type="ChEBI" id="CHEBI:456216"/>
        <dbReference type="EC" id="2.7.11.1"/>
    </reaction>
</comment>
<comment type="catalytic activity">
    <reaction>
        <text>L-threonyl-[protein] + ATP = O-phospho-L-threonyl-[protein] + ADP + H(+)</text>
        <dbReference type="Rhea" id="RHEA:46608"/>
        <dbReference type="Rhea" id="RHEA-COMP:11060"/>
        <dbReference type="Rhea" id="RHEA-COMP:11605"/>
        <dbReference type="ChEBI" id="CHEBI:15378"/>
        <dbReference type="ChEBI" id="CHEBI:30013"/>
        <dbReference type="ChEBI" id="CHEBI:30616"/>
        <dbReference type="ChEBI" id="CHEBI:61977"/>
        <dbReference type="ChEBI" id="CHEBI:456216"/>
        <dbReference type="EC" id="2.7.11.1"/>
    </reaction>
</comment>
<comment type="subcellular location">
    <subcellularLocation>
        <location evidence="1">Cell membrane</location>
        <topology evidence="1">Multi-pass membrane protein</topology>
    </subcellularLocation>
</comment>
<comment type="disruption phenotype">
    <text evidence="4">Probably essential, it was not disrupted in a global transposon mutagenesis study.</text>
</comment>
<comment type="similarity">
    <text evidence="2">Belongs to the protein kinase superfamily. Ser/Thr protein kinase family.</text>
</comment>
<sequence length="387" mass="44626">MEAILKIGDIVENKYQIEKLLNRGGMDSYLFLAKNLNLKNYGPVQKKQYGHLVLKVVQKNPKINENNWKKFLDEMVTTTRVHHSNLVKSFDVVNPFLKIVRGNKTIALNQIVMIAMEYVDGPSLRQLLNRKGYFSVSEVVYYFTKIVKAIDYLHSFKHQIIHRDLKPENILFTSDLTDIKLLDFGIASTVVKVAEKTEVLTDENSLFGTVSYMIPDVLESTVNKAGKKVRKPPNAQYDIYSLGIILFEMLVGRVPFNKSINPNKERETIQKARNFDLPLMQATRSDIPNSLENIAFRCTAVKRENNKWLYSSTKELLEDLANWENEQAMIKPANERVLEGQVEIREMMLEKPLAWYFKTWALSIFTIVFIGLIIAAIVLLLIFNARF</sequence>
<proteinExistence type="inferred from homology"/>
<protein>
    <recommendedName>
        <fullName>Putative serine/threonine-protein kinase</fullName>
        <ecNumber evidence="2">2.7.11.1</ecNumber>
    </recommendedName>
</protein>
<dbReference type="EC" id="2.7.11.1" evidence="2"/>
<dbReference type="EMBL" id="L43967">
    <property type="protein sequence ID" value="AAC71327.2"/>
    <property type="molecule type" value="Genomic_DNA"/>
</dbReference>
<dbReference type="EMBL" id="U01720">
    <property type="protein sequence ID" value="AAC43195.1"/>
    <property type="molecule type" value="Unassigned_DNA"/>
</dbReference>
<dbReference type="EMBL" id="U01748">
    <property type="protein sequence ID" value="AAD10561.1"/>
    <property type="molecule type" value="Genomic_DNA"/>
</dbReference>
<dbReference type="RefSeq" id="WP_009885667.1">
    <property type="nucleotide sequence ID" value="NC_000908.2"/>
</dbReference>
<dbReference type="SMR" id="P47355"/>
<dbReference type="STRING" id="243273.MG_109"/>
<dbReference type="GeneID" id="88282233"/>
<dbReference type="KEGG" id="mge:MG_109"/>
<dbReference type="eggNOG" id="COG0515">
    <property type="taxonomic scope" value="Bacteria"/>
</dbReference>
<dbReference type="HOGENOM" id="CLU_700090_0_0_14"/>
<dbReference type="InParanoid" id="P47355"/>
<dbReference type="OrthoDB" id="9788659at2"/>
<dbReference type="BioCyc" id="MGEN243273:G1GJ2-122-MONOMER"/>
<dbReference type="Proteomes" id="UP000000807">
    <property type="component" value="Chromosome"/>
</dbReference>
<dbReference type="GO" id="GO:0005886">
    <property type="term" value="C:plasma membrane"/>
    <property type="evidence" value="ECO:0007669"/>
    <property type="project" value="UniProtKB-SubCell"/>
</dbReference>
<dbReference type="GO" id="GO:0005524">
    <property type="term" value="F:ATP binding"/>
    <property type="evidence" value="ECO:0007669"/>
    <property type="project" value="UniProtKB-KW"/>
</dbReference>
<dbReference type="GO" id="GO:0106310">
    <property type="term" value="F:protein serine kinase activity"/>
    <property type="evidence" value="ECO:0007669"/>
    <property type="project" value="RHEA"/>
</dbReference>
<dbReference type="GO" id="GO:0004674">
    <property type="term" value="F:protein serine/threonine kinase activity"/>
    <property type="evidence" value="ECO:0000318"/>
    <property type="project" value="GO_Central"/>
</dbReference>
<dbReference type="GO" id="GO:0007165">
    <property type="term" value="P:signal transduction"/>
    <property type="evidence" value="ECO:0000318"/>
    <property type="project" value="GO_Central"/>
</dbReference>
<dbReference type="CDD" id="cd14014">
    <property type="entry name" value="STKc_PknB_like"/>
    <property type="match status" value="1"/>
</dbReference>
<dbReference type="Gene3D" id="3.30.200.20">
    <property type="entry name" value="Phosphorylase Kinase, domain 1"/>
    <property type="match status" value="1"/>
</dbReference>
<dbReference type="Gene3D" id="1.10.510.10">
    <property type="entry name" value="Transferase(Phosphotransferase) domain 1"/>
    <property type="match status" value="1"/>
</dbReference>
<dbReference type="InterPro" id="IPR011009">
    <property type="entry name" value="Kinase-like_dom_sf"/>
</dbReference>
<dbReference type="InterPro" id="IPR000719">
    <property type="entry name" value="Prot_kinase_dom"/>
</dbReference>
<dbReference type="InterPro" id="IPR008271">
    <property type="entry name" value="Ser/Thr_kinase_AS"/>
</dbReference>
<dbReference type="PANTHER" id="PTHR24345:SF0">
    <property type="entry name" value="CELL CYCLE SERINE_THREONINE-PROTEIN KINASE CDC5_MSD2"/>
    <property type="match status" value="1"/>
</dbReference>
<dbReference type="PANTHER" id="PTHR24345">
    <property type="entry name" value="SERINE/THREONINE-PROTEIN KINASE PLK"/>
    <property type="match status" value="1"/>
</dbReference>
<dbReference type="Pfam" id="PF00069">
    <property type="entry name" value="Pkinase"/>
    <property type="match status" value="1"/>
</dbReference>
<dbReference type="SMART" id="SM00220">
    <property type="entry name" value="S_TKc"/>
    <property type="match status" value="1"/>
</dbReference>
<dbReference type="SUPFAM" id="SSF56112">
    <property type="entry name" value="Protein kinase-like (PK-like)"/>
    <property type="match status" value="1"/>
</dbReference>
<dbReference type="PROSITE" id="PS50011">
    <property type="entry name" value="PROTEIN_KINASE_DOM"/>
    <property type="match status" value="1"/>
</dbReference>
<dbReference type="PROSITE" id="PS00108">
    <property type="entry name" value="PROTEIN_KINASE_ST"/>
    <property type="match status" value="1"/>
</dbReference>
<keyword id="KW-0067">ATP-binding</keyword>
<keyword id="KW-1003">Cell membrane</keyword>
<keyword id="KW-0418">Kinase</keyword>
<keyword id="KW-0472">Membrane</keyword>
<keyword id="KW-0547">Nucleotide-binding</keyword>
<keyword id="KW-1185">Reference proteome</keyword>
<keyword id="KW-0723">Serine/threonine-protein kinase</keyword>
<keyword id="KW-0808">Transferase</keyword>
<keyword id="KW-0812">Transmembrane</keyword>
<keyword id="KW-1133">Transmembrane helix</keyword>